<name>HPA3_YEAST</name>
<evidence type="ECO:0000250" key="1">
    <source>
        <dbReference type="UniProtKB" id="Q06592"/>
    </source>
</evidence>
<evidence type="ECO:0000255" key="2">
    <source>
        <dbReference type="PROSITE-ProRule" id="PRU00532"/>
    </source>
</evidence>
<evidence type="ECO:0000269" key="3">
    <source>
    </source>
</evidence>
<evidence type="ECO:0000269" key="4">
    <source>
    </source>
</evidence>
<evidence type="ECO:0000269" key="5">
    <source>
    </source>
</evidence>
<evidence type="ECO:0000269" key="6">
    <source>
    </source>
</evidence>
<evidence type="ECO:0000269" key="7">
    <source>
    </source>
</evidence>
<evidence type="ECO:0000269" key="8">
    <source>
    </source>
</evidence>
<evidence type="ECO:0000269" key="9">
    <source>
    </source>
</evidence>
<evidence type="ECO:0000303" key="10">
    <source>
    </source>
</evidence>
<evidence type="ECO:0000303" key="11">
    <source>
    </source>
</evidence>
<evidence type="ECO:0000305" key="12"/>
<evidence type="ECO:0000305" key="13">
    <source>
    </source>
</evidence>
<evidence type="ECO:0000305" key="14">
    <source>
    </source>
</evidence>
<evidence type="ECO:0000312" key="15">
    <source>
        <dbReference type="SGD" id="S000000792"/>
    </source>
</evidence>
<evidence type="ECO:0007744" key="16">
    <source>
    </source>
</evidence>
<proteinExistence type="evidence at protein level"/>
<organism>
    <name type="scientific">Saccharomyces cerevisiae (strain ATCC 204508 / S288c)</name>
    <name type="common">Baker's yeast</name>
    <dbReference type="NCBI Taxonomy" id="559292"/>
    <lineage>
        <taxon>Eukaryota</taxon>
        <taxon>Fungi</taxon>
        <taxon>Dikarya</taxon>
        <taxon>Ascomycota</taxon>
        <taxon>Saccharomycotina</taxon>
        <taxon>Saccharomycetes</taxon>
        <taxon>Saccharomycetales</taxon>
        <taxon>Saccharomycetaceae</taxon>
        <taxon>Saccharomyces</taxon>
    </lineage>
</organism>
<keyword id="KW-0007">Acetylation</keyword>
<keyword id="KW-0012">Acyltransferase</keyword>
<keyword id="KW-0963">Cytoplasm</keyword>
<keyword id="KW-0539">Nucleus</keyword>
<keyword id="KW-1185">Reference proteome</keyword>
<keyword id="KW-0808">Transferase</keyword>
<protein>
    <recommendedName>
        <fullName evidence="11">D-amino-acid N-acetyltransferase HPA3</fullName>
        <shortName>DNT</shortName>
        <ecNumber evidence="6">2.3.1.36</ecNumber>
    </recommendedName>
</protein>
<reference key="1">
    <citation type="journal article" date="1997" name="Nature">
        <title>The nucleotide sequence of Saccharomyces cerevisiae chromosome V.</title>
        <authorList>
            <person name="Dietrich F.S."/>
            <person name="Mulligan J.T."/>
            <person name="Hennessy K.M."/>
            <person name="Yelton M.A."/>
            <person name="Allen E."/>
            <person name="Araujo R."/>
            <person name="Aviles E."/>
            <person name="Berno A."/>
            <person name="Brennan T."/>
            <person name="Carpenter J."/>
            <person name="Chen E."/>
            <person name="Cherry J.M."/>
            <person name="Chung E."/>
            <person name="Duncan M."/>
            <person name="Guzman E."/>
            <person name="Hartzell G."/>
            <person name="Hunicke-Smith S."/>
            <person name="Hyman R.W."/>
            <person name="Kayser A."/>
            <person name="Komp C."/>
            <person name="Lashkari D."/>
            <person name="Lew H."/>
            <person name="Lin D."/>
            <person name="Mosedale D."/>
            <person name="Nakahara K."/>
            <person name="Namath A."/>
            <person name="Norgren R."/>
            <person name="Oefner P."/>
            <person name="Oh C."/>
            <person name="Petel F.X."/>
            <person name="Roberts D."/>
            <person name="Sehl P."/>
            <person name="Schramm S."/>
            <person name="Shogren T."/>
            <person name="Smith V."/>
            <person name="Taylor P."/>
            <person name="Wei Y."/>
            <person name="Botstein D."/>
            <person name="Davis R.W."/>
        </authorList>
    </citation>
    <scope>NUCLEOTIDE SEQUENCE [LARGE SCALE GENOMIC DNA]</scope>
    <source>
        <strain>ATCC 204508 / S288c</strain>
    </source>
</reference>
<reference key="2">
    <citation type="journal article" date="2014" name="G3 (Bethesda)">
        <title>The reference genome sequence of Saccharomyces cerevisiae: Then and now.</title>
        <authorList>
            <person name="Engel S.R."/>
            <person name="Dietrich F.S."/>
            <person name="Fisk D.G."/>
            <person name="Binkley G."/>
            <person name="Balakrishnan R."/>
            <person name="Costanzo M.C."/>
            <person name="Dwight S.S."/>
            <person name="Hitz B.C."/>
            <person name="Karra K."/>
            <person name="Nash R.S."/>
            <person name="Weng S."/>
            <person name="Wong E.D."/>
            <person name="Lloyd P."/>
            <person name="Skrzypek M.S."/>
            <person name="Miyasato S.R."/>
            <person name="Simison M."/>
            <person name="Cherry J.M."/>
        </authorList>
    </citation>
    <scope>GENOME REANNOTATION</scope>
    <source>
        <strain>ATCC 204508 / S288c</strain>
    </source>
</reference>
<reference key="3">
    <citation type="journal article" date="1999" name="J. Mol. Biol.">
        <title>Crystal structure of the histone acetyltransferase Hpa2: a tetrameric member of the Gcn5-related N-acetyltransferase superfamily.</title>
        <authorList>
            <person name="Angus-Hill M.L."/>
            <person name="Dutnall R.N."/>
            <person name="Tafrov S.T."/>
            <person name="Sternglanz R."/>
            <person name="Ramakrishnan V."/>
        </authorList>
    </citation>
    <scope>FUNCTION</scope>
    <scope>ACETYLATION SUBSTRATE</scope>
</reference>
<reference key="4">
    <citation type="journal article" date="2003" name="Nature">
        <title>Global analysis of protein localization in budding yeast.</title>
        <authorList>
            <person name="Huh W.-K."/>
            <person name="Falvo J.V."/>
            <person name="Gerke L.C."/>
            <person name="Carroll A.S."/>
            <person name="Howson R.W."/>
            <person name="Weissman J.S."/>
            <person name="O'Shea E.K."/>
        </authorList>
    </citation>
    <scope>SUBCELLULAR LOCATION [LARGE SCALE ANALYSIS]</scope>
</reference>
<reference key="5">
    <citation type="journal article" date="2003" name="Nature">
        <title>Global analysis of protein expression in yeast.</title>
        <authorList>
            <person name="Ghaemmaghami S."/>
            <person name="Huh W.-K."/>
            <person name="Bower K."/>
            <person name="Howson R.W."/>
            <person name="Belle A."/>
            <person name="Dephoure N."/>
            <person name="O'Shea E.K."/>
            <person name="Weissman J.S."/>
        </authorList>
    </citation>
    <scope>LEVEL OF PROTEIN EXPRESSION [LARGE SCALE ANALYSIS]</scope>
</reference>
<reference key="6">
    <citation type="journal article" date="2004" name="Arch. Microbiol.">
        <title>D-amino acid N-acetyltransferase of Saccharomyces cerevisiae: a close homologue of histone acetyltransferase Hpa2p acting exclusively on free D-amino acids.</title>
        <authorList>
            <person name="Yow G.Y."/>
            <person name="Uo T."/>
            <person name="Yoshimura T."/>
            <person name="Esaki N."/>
        </authorList>
    </citation>
    <scope>FUNCTION</scope>
    <scope>CATALYTIC ACTIVITY</scope>
    <scope>BIOPHYSICOCHEMICAL PROPERTIES</scope>
</reference>
<reference key="7">
    <citation type="journal article" date="2006" name="Arch. Microbiol.">
        <title>Physiological role of D-amino acid-N-acetyltransferase of Saccharomyces cerevisiae: detoxification of D-amino acids.</title>
        <authorList>
            <person name="Yow G.Y."/>
            <person name="Uo T."/>
            <person name="Yoshimura T."/>
            <person name="Esaki N."/>
        </authorList>
    </citation>
    <scope>FUNCTION</scope>
</reference>
<reference key="8">
    <citation type="journal article" date="2012" name="Proc. Natl. Acad. Sci. U.S.A.">
        <title>N-terminal acetylome analyses and functional insights of the N-terminal acetyltransferase NatB.</title>
        <authorList>
            <person name="Van Damme P."/>
            <person name="Lasa M."/>
            <person name="Polevoda B."/>
            <person name="Gazquez C."/>
            <person name="Elosegui-Artola A."/>
            <person name="Kim D.S."/>
            <person name="De Juan-Pardo E."/>
            <person name="Demeyer K."/>
            <person name="Hole K."/>
            <person name="Larrea E."/>
            <person name="Timmerman E."/>
            <person name="Prieto J."/>
            <person name="Arnesen T."/>
            <person name="Sherman F."/>
            <person name="Gevaert K."/>
            <person name="Aldabe R."/>
        </authorList>
    </citation>
    <scope>ACETYLATION [LARGE SCALE ANALYSIS] AT SER-2</scope>
    <scope>CLEAVAGE OF INITIATOR METHIONINE [LARGE SCALE ANALYSIS]</scope>
    <scope>IDENTIFICATION BY MASS SPECTROMETRY [LARGE SCALE ANALYSIS]</scope>
</reference>
<reference key="9">
    <citation type="journal article" date="2013" name="J. Biol. Chem.">
        <title>Biochemical characterization of Hpa2 and Hpa3, two small closely related acetyltransferases from Saccharomyces cerevisiae.</title>
        <authorList>
            <person name="Sampath V."/>
            <person name="Liu B."/>
            <person name="Tafrov S."/>
            <person name="Srinivasan M."/>
            <person name="Rieger R."/>
            <person name="Chen E.I."/>
            <person name="Sternglanz R."/>
        </authorList>
    </citation>
    <scope>FUNCTION</scope>
    <scope>SUBSTRATE SPECIFICITY</scope>
    <scope>IDENTIFICATION OF PROBABLE INITIATION SITE</scope>
</reference>
<reference key="10">
    <citation type="journal article" date="2019" name="Biotechnol. Bioeng.">
        <title>Efficient production of S-adenosyl-l-methionine from dl-methionine in metabolic engineered Saccharomyces cerevisiae.</title>
        <authorList>
            <person name="Liu W."/>
            <person name="Tang D."/>
            <person name="Shi R."/>
            <person name="Lian J."/>
            <person name="Huang L."/>
            <person name="Cai J."/>
            <person name="Xu Z."/>
        </authorList>
    </citation>
    <scope>FUNCTION</scope>
    <scope>DISRUPTION PHENOTYPE</scope>
</reference>
<sequence>MSNEEPEKMVNDRIVVKAIEPKDEEAWNKLWKEYQGFQKTVMPPEVATTTFARFIDPTVKLWGALAFDTETGDAIGFAHYLNHLTSWHVEEVVYMNDLYVTERARVKGVGRKLIEFVYSRADELGTPAVYWVTDHYNHRAQLLYTKVAYKTDKVLYKRNGY</sequence>
<comment type="function">
    <text evidence="3 6 7 8 9">N-acetyltransferase that acts on a wide range of D-amino acids (PubMed:15375647). Catalyzes the N-acetylation through an ordered bi-bi mechanism, in which acetyl-CoA is the first substrate to be bound and CoA is the last product to be liberated (PubMed:15375647). D-amino acids are toxic for the cell and their N-acetylation, preceding removal from cells, plays an important role in detoxification of D-amino acids (PubMed:10600387, PubMed:16362288, PubMed:31478186). In vitro, capable of acetylating histone H4 at 'Lys-8' and polyamines like putrescine, spermidine and spermine (PubMed:23775086).</text>
</comment>
<comment type="catalytic activity">
    <reaction evidence="6 14">
        <text>a D-alpha-amino acid + acetyl-CoA = an N-acetyl-D-amino acid + CoA + H(+)</text>
        <dbReference type="Rhea" id="RHEA:20704"/>
        <dbReference type="ChEBI" id="CHEBI:15378"/>
        <dbReference type="ChEBI" id="CHEBI:57287"/>
        <dbReference type="ChEBI" id="CHEBI:57288"/>
        <dbReference type="ChEBI" id="CHEBI:58496"/>
        <dbReference type="ChEBI" id="CHEBI:59871"/>
        <dbReference type="EC" id="2.3.1.36"/>
    </reaction>
</comment>
<comment type="biophysicochemical properties">
    <kinetics>
        <KM evidence="6">34 mM for D-Serine</KM>
        <KM evidence="6">54 mM for D-Alanine</KM>
        <Vmax evidence="6">22.0 umol/min/mg enzyme toward D-Serine</Vmax>
        <Vmax evidence="6">18.0 umol/min/mg enzyme toward D-Alanine</Vmax>
    </kinetics>
</comment>
<comment type="subcellular location">
    <subcellularLocation>
        <location evidence="4">Cytoplasm</location>
    </subcellularLocation>
    <subcellularLocation>
        <location evidence="4">Nucleus</location>
    </subcellularLocation>
</comment>
<comment type="PTM">
    <text evidence="13">Autoacetylates in an intermolecular reaction.</text>
</comment>
<comment type="disruption phenotype">
    <text evidence="9">Sensitive to D-methionine; abolishes the formation of N-acetyl-D-methionine and leads to the accumulation of D-methionine in cells when supplemented in the growth medium.</text>
</comment>
<comment type="miscellaneous">
    <text evidence="5">Present with 1200 molecules/cell in log phase SD medium.</text>
</comment>
<comment type="similarity">
    <text evidence="12">Belongs to the acetyltransferase family. GNAT subfamily.</text>
</comment>
<comment type="sequence caution" evidence="12">
    <conflict type="erroneous initiation">
        <sequence resource="EMBL-CDS" id="AAB65021"/>
    </conflict>
    <text>Extended N-terminus.</text>
</comment>
<comment type="sequence caution" evidence="12">
    <conflict type="erroneous initiation">
        <sequence resource="EMBL-CDS" id="DAA07588"/>
    </conflict>
    <text>Extended N-terminus.</text>
</comment>
<gene>
    <name evidence="10" type="primary">HPA3</name>
    <name evidence="15" type="ordered locus">YEL066W</name>
</gene>
<accession>P39979</accession>
<accession>D3DLI4</accession>
<feature type="initiator methionine" description="Removed" evidence="16">
    <location>
        <position position="1"/>
    </location>
</feature>
<feature type="chain" id="PRO_0000074634" description="D-amino-acid N-acetyltransferase HPA3">
    <location>
        <begin position="2"/>
        <end position="161"/>
    </location>
</feature>
<feature type="domain" description="N-acetyltransferase" evidence="2">
    <location>
        <begin position="14"/>
        <end position="161"/>
    </location>
</feature>
<feature type="binding site" evidence="1">
    <location>
        <begin position="98"/>
        <end position="111"/>
    </location>
    <ligand>
        <name>acetyl-CoA</name>
        <dbReference type="ChEBI" id="CHEBI:57288"/>
    </ligand>
</feature>
<feature type="site" description="Important for catalytic activity" evidence="1">
    <location>
        <position position="144"/>
    </location>
</feature>
<feature type="modified residue" description="N-acetylserine" evidence="16">
    <location>
        <position position="2"/>
    </location>
</feature>
<dbReference type="EC" id="2.3.1.36" evidence="6"/>
<dbReference type="EMBL" id="U18795">
    <property type="protein sequence ID" value="AAB65021.1"/>
    <property type="status" value="ALT_INIT"/>
    <property type="molecule type" value="Genomic_DNA"/>
</dbReference>
<dbReference type="EMBL" id="BK006939">
    <property type="protein sequence ID" value="DAA07588.1"/>
    <property type="status" value="ALT_INIT"/>
    <property type="molecule type" value="Genomic_DNA"/>
</dbReference>
<dbReference type="PIR" id="S50523">
    <property type="entry name" value="S50523"/>
</dbReference>
<dbReference type="RefSeq" id="NP_010848.2">
    <property type="nucleotide sequence ID" value="NM_001178881.2"/>
</dbReference>
<dbReference type="SMR" id="P39979"/>
<dbReference type="BioGRID" id="36663">
    <property type="interactions" value="55"/>
</dbReference>
<dbReference type="DIP" id="DIP-2063N"/>
<dbReference type="FunCoup" id="P39979">
    <property type="interactions" value="52"/>
</dbReference>
<dbReference type="IntAct" id="P39979">
    <property type="interactions" value="1"/>
</dbReference>
<dbReference type="STRING" id="4932.YEL066W"/>
<dbReference type="iPTMnet" id="P39979"/>
<dbReference type="PaxDb" id="4932-YEL066W"/>
<dbReference type="PeptideAtlas" id="P39979"/>
<dbReference type="GeneID" id="856642"/>
<dbReference type="KEGG" id="sce:YEL066W"/>
<dbReference type="AGR" id="SGD:S000000792"/>
<dbReference type="SGD" id="S000000792">
    <property type="gene designation" value="HPA3"/>
</dbReference>
<dbReference type="eggNOG" id="KOG3216">
    <property type="taxonomic scope" value="Eukaryota"/>
</dbReference>
<dbReference type="HOGENOM" id="CLU_013985_32_0_1"/>
<dbReference type="InParanoid" id="P39979"/>
<dbReference type="OrthoDB" id="7305308at2759"/>
<dbReference type="BioCyc" id="YEAST:G3O-30181-MONOMER"/>
<dbReference type="BRENDA" id="2.3.1.48">
    <property type="organism ID" value="984"/>
</dbReference>
<dbReference type="Reactome" id="R-SCE-351200">
    <property type="pathway name" value="Interconversion of polyamines"/>
</dbReference>
<dbReference type="SABIO-RK" id="P39979"/>
<dbReference type="BioGRID-ORCS" id="856642">
    <property type="hits" value="9 hits in 10 CRISPR screens"/>
</dbReference>
<dbReference type="PRO" id="PR:P39979"/>
<dbReference type="Proteomes" id="UP000002311">
    <property type="component" value="Chromosome V"/>
</dbReference>
<dbReference type="RNAct" id="P39979">
    <property type="molecule type" value="protein"/>
</dbReference>
<dbReference type="GO" id="GO:0005737">
    <property type="term" value="C:cytoplasm"/>
    <property type="evidence" value="ECO:0007005"/>
    <property type="project" value="SGD"/>
</dbReference>
<dbReference type="GO" id="GO:0005634">
    <property type="term" value="C:nucleus"/>
    <property type="evidence" value="ECO:0007005"/>
    <property type="project" value="SGD"/>
</dbReference>
<dbReference type="GO" id="GO:0047812">
    <property type="term" value="F:D-amino-acid N-acetyltransferase activity"/>
    <property type="evidence" value="ECO:0000314"/>
    <property type="project" value="SGD"/>
</dbReference>
<dbReference type="GO" id="GO:0004402">
    <property type="term" value="F:histone acetyltransferase activity"/>
    <property type="evidence" value="ECO:0007669"/>
    <property type="project" value="UniProtKB-EC"/>
</dbReference>
<dbReference type="GO" id="GO:0008080">
    <property type="term" value="F:N-acetyltransferase activity"/>
    <property type="evidence" value="ECO:0000314"/>
    <property type="project" value="SGD"/>
</dbReference>
<dbReference type="GO" id="GO:0070458">
    <property type="term" value="P:cellular detoxification of nitrogen compound"/>
    <property type="evidence" value="ECO:0000315"/>
    <property type="project" value="UniProtKB"/>
</dbReference>
<dbReference type="GO" id="GO:0046416">
    <property type="term" value="P:D-amino acid metabolic process"/>
    <property type="evidence" value="ECO:0000315"/>
    <property type="project" value="SGD"/>
</dbReference>
<dbReference type="CDD" id="cd04301">
    <property type="entry name" value="NAT_SF"/>
    <property type="match status" value="1"/>
</dbReference>
<dbReference type="FunFam" id="3.40.630.30:FF:000066">
    <property type="entry name" value="Histone acetyltransferase"/>
    <property type="match status" value="1"/>
</dbReference>
<dbReference type="Gene3D" id="3.40.630.30">
    <property type="match status" value="1"/>
</dbReference>
<dbReference type="InterPro" id="IPR016181">
    <property type="entry name" value="Acyl_CoA_acyltransferase"/>
</dbReference>
<dbReference type="InterPro" id="IPR051016">
    <property type="entry name" value="Diverse_Substrate_AcTransf"/>
</dbReference>
<dbReference type="InterPro" id="IPR000182">
    <property type="entry name" value="GNAT_dom"/>
</dbReference>
<dbReference type="PANTHER" id="PTHR10545">
    <property type="entry name" value="DIAMINE N-ACETYLTRANSFERASE"/>
    <property type="match status" value="1"/>
</dbReference>
<dbReference type="PANTHER" id="PTHR10545:SF29">
    <property type="entry name" value="GH14572P-RELATED"/>
    <property type="match status" value="1"/>
</dbReference>
<dbReference type="Pfam" id="PF00583">
    <property type="entry name" value="Acetyltransf_1"/>
    <property type="match status" value="1"/>
</dbReference>
<dbReference type="SUPFAM" id="SSF55729">
    <property type="entry name" value="Acyl-CoA N-acyltransferases (Nat)"/>
    <property type="match status" value="1"/>
</dbReference>
<dbReference type="PROSITE" id="PS51186">
    <property type="entry name" value="GNAT"/>
    <property type="match status" value="1"/>
</dbReference>